<reference key="1">
    <citation type="journal article" date="1995" name="DNA Res.">
        <title>Sequence analysis of the genome of the unicellular cyanobacterium Synechocystis sp. strain PCC6803. I. Sequence features in the 1 Mb region from map positions 64% to 92% of the genome.</title>
        <authorList>
            <person name="Kaneko T."/>
            <person name="Tanaka A."/>
            <person name="Sato S."/>
            <person name="Kotani H."/>
            <person name="Sazuka T."/>
            <person name="Miyajima N."/>
            <person name="Sugiura M."/>
            <person name="Tabata S."/>
        </authorList>
    </citation>
    <scope>NUCLEOTIDE SEQUENCE [LARGE SCALE GENOMIC DNA]</scope>
    <source>
        <strain>ATCC 27184 / PCC 6803 / N-1</strain>
    </source>
</reference>
<reference key="2">
    <citation type="journal article" date="1996" name="DNA Res.">
        <title>Sequence analysis of the genome of the unicellular cyanobacterium Synechocystis sp. strain PCC6803. II. Sequence determination of the entire genome and assignment of potential protein-coding regions.</title>
        <authorList>
            <person name="Kaneko T."/>
            <person name="Sato S."/>
            <person name="Kotani H."/>
            <person name="Tanaka A."/>
            <person name="Asamizu E."/>
            <person name="Nakamura Y."/>
            <person name="Miyajima N."/>
            <person name="Hirosawa M."/>
            <person name="Sugiura M."/>
            <person name="Sasamoto S."/>
            <person name="Kimura T."/>
            <person name="Hosouchi T."/>
            <person name="Matsuno A."/>
            <person name="Muraki A."/>
            <person name="Nakazaki N."/>
            <person name="Naruo K."/>
            <person name="Okumura S."/>
            <person name="Shimpo S."/>
            <person name="Takeuchi C."/>
            <person name="Wada T."/>
            <person name="Watanabe A."/>
            <person name="Yamada M."/>
            <person name="Yasuda M."/>
            <person name="Tabata S."/>
        </authorList>
    </citation>
    <scope>NUCLEOTIDE SEQUENCE [LARGE SCALE GENOMIC DNA]</scope>
    <source>
        <strain>ATCC 27184 / PCC 6803 / Kazusa</strain>
    </source>
</reference>
<reference key="3">
    <citation type="journal article" date="1997" name="Electrophoresis">
        <title>Towards a proteome project of cyanobacterium Synechocystis sp. strain PCC6803: linking 130 protein spots with their respective genes.</title>
        <authorList>
            <person name="Sazuka T."/>
            <person name="Ohara O."/>
        </authorList>
    </citation>
    <scope>PROTEIN SEQUENCE OF 123-131</scope>
</reference>
<feature type="chain" id="PRO_0000061964" description="Probable hydrolase sll0100">
    <location>
        <begin position="1"/>
        <end position="393"/>
    </location>
</feature>
<name>Y100_SYNY3</name>
<keyword id="KW-0903">Direct protein sequencing</keyword>
<keyword id="KW-0378">Hydrolase</keyword>
<keyword id="KW-1185">Reference proteome</keyword>
<proteinExistence type="evidence at protein level"/>
<dbReference type="EC" id="3.-.-.-"/>
<dbReference type="EMBL" id="BA000022">
    <property type="protein sequence ID" value="BAA10640.1"/>
    <property type="molecule type" value="Genomic_DNA"/>
</dbReference>
<dbReference type="PIR" id="S76696">
    <property type="entry name" value="S76696"/>
</dbReference>
<dbReference type="SMR" id="P54984"/>
<dbReference type="FunCoup" id="P54984">
    <property type="interactions" value="156"/>
</dbReference>
<dbReference type="STRING" id="1148.gene:10500144"/>
<dbReference type="PaxDb" id="1148-1208472"/>
<dbReference type="EnsemblBacteria" id="BAA10640">
    <property type="protein sequence ID" value="BAA10640"/>
    <property type="gene ID" value="BAA10640"/>
</dbReference>
<dbReference type="KEGG" id="syn:sll0100"/>
<dbReference type="eggNOG" id="COG1473">
    <property type="taxonomic scope" value="Bacteria"/>
</dbReference>
<dbReference type="InParanoid" id="P54984"/>
<dbReference type="PhylomeDB" id="P54984"/>
<dbReference type="Proteomes" id="UP000001425">
    <property type="component" value="Chromosome"/>
</dbReference>
<dbReference type="GO" id="GO:0016787">
    <property type="term" value="F:hydrolase activity"/>
    <property type="evidence" value="ECO:0000318"/>
    <property type="project" value="GO_Central"/>
</dbReference>
<dbReference type="CDD" id="cd08014">
    <property type="entry name" value="M20_Acy1-like"/>
    <property type="match status" value="1"/>
</dbReference>
<dbReference type="FunFam" id="3.30.70.360:FF:000014">
    <property type="entry name" value="N-acyl-L-amino acid amidohydrolase"/>
    <property type="match status" value="1"/>
</dbReference>
<dbReference type="Gene3D" id="3.30.70.360">
    <property type="match status" value="1"/>
</dbReference>
<dbReference type="Gene3D" id="3.40.630.10">
    <property type="entry name" value="Zn peptidases"/>
    <property type="match status" value="1"/>
</dbReference>
<dbReference type="InterPro" id="IPR017439">
    <property type="entry name" value="Amidohydrolase"/>
</dbReference>
<dbReference type="InterPro" id="IPR036264">
    <property type="entry name" value="Bact_exopeptidase_dim_dom"/>
</dbReference>
<dbReference type="InterPro" id="IPR002933">
    <property type="entry name" value="Peptidase_M20"/>
</dbReference>
<dbReference type="InterPro" id="IPR011650">
    <property type="entry name" value="Peptidase_M20_dimer"/>
</dbReference>
<dbReference type="NCBIfam" id="TIGR01891">
    <property type="entry name" value="amidohydrolases"/>
    <property type="match status" value="1"/>
</dbReference>
<dbReference type="PANTHER" id="PTHR11014:SF63">
    <property type="entry name" value="METALLOPEPTIDASE, PUTATIVE (AFU_ORTHOLOGUE AFUA_6G09600)-RELATED"/>
    <property type="match status" value="1"/>
</dbReference>
<dbReference type="PANTHER" id="PTHR11014">
    <property type="entry name" value="PEPTIDASE M20 FAMILY MEMBER"/>
    <property type="match status" value="1"/>
</dbReference>
<dbReference type="Pfam" id="PF07687">
    <property type="entry name" value="M20_dimer"/>
    <property type="match status" value="1"/>
</dbReference>
<dbReference type="Pfam" id="PF01546">
    <property type="entry name" value="Peptidase_M20"/>
    <property type="match status" value="1"/>
</dbReference>
<dbReference type="PIRSF" id="PIRSF005962">
    <property type="entry name" value="Pept_M20D_amidohydro"/>
    <property type="match status" value="1"/>
</dbReference>
<dbReference type="SUPFAM" id="SSF55031">
    <property type="entry name" value="Bacterial exopeptidase dimerisation domain"/>
    <property type="match status" value="1"/>
</dbReference>
<dbReference type="SUPFAM" id="SSF53187">
    <property type="entry name" value="Zn-dependent exopeptidases"/>
    <property type="match status" value="1"/>
</dbReference>
<organism>
    <name type="scientific">Synechocystis sp. (strain ATCC 27184 / PCC 6803 / Kazusa)</name>
    <dbReference type="NCBI Taxonomy" id="1111708"/>
    <lineage>
        <taxon>Bacteria</taxon>
        <taxon>Bacillati</taxon>
        <taxon>Cyanobacteriota</taxon>
        <taxon>Cyanophyceae</taxon>
        <taxon>Synechococcales</taxon>
        <taxon>Merismopediaceae</taxon>
        <taxon>Synechocystis</taxon>
    </lineage>
</organism>
<evidence type="ECO:0000305" key="1"/>
<gene>
    <name type="ordered locus">sll0100</name>
</gene>
<comment type="similarity">
    <text evidence="1">Belongs to the peptidase M20 family.</text>
</comment>
<accession>P54984</accession>
<sequence length="393" mass="42657">MELKNLAQTLLPRLVEIRRHLHAHPELSGQEYQTAAYVAGVLSSCGLHVEEAIGKTGVVGQLSGKGDDPRLLAIRTDMDALPIEEMVSLPFASRHPGVMHACGHDIHTTLGLGTAMVLSQMGHRLPGDVRFLFQPAEEIAQGASWMIQDGAMKGVSHILGVHVFPSIPAQQVGIRYGALTAAADDLEIFIQGESGHGARPHEAIDAIWIAAQVITALQQAISRTQNPLRPMVLSLGQISGGRAPNVIADQVRMAGTVRSLHPETHAQLPQWIEGIVANVCQTYGAKYEVNYRRGVPSVQNDAQLNKLLENAVREAWGESALQIIPEPSLGAEDFALYLEHAPGAMFRLGTGFGDRQMNHPLHHPRFEADEAAILTGVVTLSYAAWQYWQNIAI</sequence>
<protein>
    <recommendedName>
        <fullName>Probable hydrolase sll0100</fullName>
        <ecNumber>3.-.-.-</ecNumber>
    </recommendedName>
</protein>